<accession>Q7W089</accession>
<feature type="chain" id="PRO_0000149362" description="Adenine phosphoribosyltransferase">
    <location>
        <begin position="1"/>
        <end position="182"/>
    </location>
</feature>
<evidence type="ECO:0000255" key="1">
    <source>
        <dbReference type="HAMAP-Rule" id="MF_00004"/>
    </source>
</evidence>
<dbReference type="EC" id="2.4.2.7" evidence="1"/>
<dbReference type="EMBL" id="BX640411">
    <property type="protein sequence ID" value="CAE40644.1"/>
    <property type="molecule type" value="Genomic_DNA"/>
</dbReference>
<dbReference type="RefSeq" id="NP_879147.1">
    <property type="nucleotide sequence ID" value="NC_002929.2"/>
</dbReference>
<dbReference type="RefSeq" id="WP_010929716.1">
    <property type="nucleotide sequence ID" value="NZ_CP039022.1"/>
</dbReference>
<dbReference type="SMR" id="Q7W089"/>
<dbReference type="STRING" id="257313.BP0264"/>
<dbReference type="PaxDb" id="257313-BP0264"/>
<dbReference type="KEGG" id="bpe:BP0264"/>
<dbReference type="PATRIC" id="fig|257313.5.peg.286"/>
<dbReference type="eggNOG" id="COG0503">
    <property type="taxonomic scope" value="Bacteria"/>
</dbReference>
<dbReference type="HOGENOM" id="CLU_063339_3_0_4"/>
<dbReference type="UniPathway" id="UPA00588">
    <property type="reaction ID" value="UER00646"/>
</dbReference>
<dbReference type="Proteomes" id="UP000002676">
    <property type="component" value="Chromosome"/>
</dbReference>
<dbReference type="GO" id="GO:0005737">
    <property type="term" value="C:cytoplasm"/>
    <property type="evidence" value="ECO:0007669"/>
    <property type="project" value="UniProtKB-SubCell"/>
</dbReference>
<dbReference type="GO" id="GO:0002055">
    <property type="term" value="F:adenine binding"/>
    <property type="evidence" value="ECO:0007669"/>
    <property type="project" value="TreeGrafter"/>
</dbReference>
<dbReference type="GO" id="GO:0003999">
    <property type="term" value="F:adenine phosphoribosyltransferase activity"/>
    <property type="evidence" value="ECO:0007669"/>
    <property type="project" value="UniProtKB-UniRule"/>
</dbReference>
<dbReference type="GO" id="GO:0016208">
    <property type="term" value="F:AMP binding"/>
    <property type="evidence" value="ECO:0007669"/>
    <property type="project" value="TreeGrafter"/>
</dbReference>
<dbReference type="GO" id="GO:0006168">
    <property type="term" value="P:adenine salvage"/>
    <property type="evidence" value="ECO:0007669"/>
    <property type="project" value="InterPro"/>
</dbReference>
<dbReference type="GO" id="GO:0044209">
    <property type="term" value="P:AMP salvage"/>
    <property type="evidence" value="ECO:0007669"/>
    <property type="project" value="UniProtKB-UniRule"/>
</dbReference>
<dbReference type="GO" id="GO:0006166">
    <property type="term" value="P:purine ribonucleoside salvage"/>
    <property type="evidence" value="ECO:0007669"/>
    <property type="project" value="UniProtKB-KW"/>
</dbReference>
<dbReference type="CDD" id="cd06223">
    <property type="entry name" value="PRTases_typeI"/>
    <property type="match status" value="1"/>
</dbReference>
<dbReference type="FunFam" id="3.40.50.2020:FF:000021">
    <property type="entry name" value="Adenine phosphoribosyltransferase"/>
    <property type="match status" value="1"/>
</dbReference>
<dbReference type="Gene3D" id="3.40.50.2020">
    <property type="match status" value="1"/>
</dbReference>
<dbReference type="HAMAP" id="MF_00004">
    <property type="entry name" value="Aden_phosphoribosyltr"/>
    <property type="match status" value="1"/>
</dbReference>
<dbReference type="InterPro" id="IPR005764">
    <property type="entry name" value="Ade_phspho_trans"/>
</dbReference>
<dbReference type="InterPro" id="IPR000836">
    <property type="entry name" value="PRibTrfase_dom"/>
</dbReference>
<dbReference type="InterPro" id="IPR029057">
    <property type="entry name" value="PRTase-like"/>
</dbReference>
<dbReference type="InterPro" id="IPR050054">
    <property type="entry name" value="UPRTase/APRTase"/>
</dbReference>
<dbReference type="NCBIfam" id="TIGR01090">
    <property type="entry name" value="apt"/>
    <property type="match status" value="1"/>
</dbReference>
<dbReference type="NCBIfam" id="NF002634">
    <property type="entry name" value="PRK02304.1-3"/>
    <property type="match status" value="1"/>
</dbReference>
<dbReference type="NCBIfam" id="NF002636">
    <property type="entry name" value="PRK02304.1-5"/>
    <property type="match status" value="1"/>
</dbReference>
<dbReference type="PANTHER" id="PTHR32315">
    <property type="entry name" value="ADENINE PHOSPHORIBOSYLTRANSFERASE"/>
    <property type="match status" value="1"/>
</dbReference>
<dbReference type="PANTHER" id="PTHR32315:SF3">
    <property type="entry name" value="ADENINE PHOSPHORIBOSYLTRANSFERASE"/>
    <property type="match status" value="1"/>
</dbReference>
<dbReference type="Pfam" id="PF00156">
    <property type="entry name" value="Pribosyltran"/>
    <property type="match status" value="1"/>
</dbReference>
<dbReference type="SUPFAM" id="SSF53271">
    <property type="entry name" value="PRTase-like"/>
    <property type="match status" value="1"/>
</dbReference>
<dbReference type="PROSITE" id="PS00103">
    <property type="entry name" value="PUR_PYR_PR_TRANSFER"/>
    <property type="match status" value="1"/>
</dbReference>
<proteinExistence type="inferred from homology"/>
<name>APT_BORPE</name>
<gene>
    <name evidence="1" type="primary">apt</name>
    <name type="ordered locus">BP0264</name>
</gene>
<organism>
    <name type="scientific">Bordetella pertussis (strain Tohama I / ATCC BAA-589 / NCTC 13251)</name>
    <dbReference type="NCBI Taxonomy" id="257313"/>
    <lineage>
        <taxon>Bacteria</taxon>
        <taxon>Pseudomonadati</taxon>
        <taxon>Pseudomonadota</taxon>
        <taxon>Betaproteobacteria</taxon>
        <taxon>Burkholderiales</taxon>
        <taxon>Alcaligenaceae</taxon>
        <taxon>Bordetella</taxon>
    </lineage>
</organism>
<protein>
    <recommendedName>
        <fullName evidence="1">Adenine phosphoribosyltransferase</fullName>
        <shortName evidence="1">APRT</shortName>
        <ecNumber evidence="1">2.4.2.7</ecNumber>
    </recommendedName>
</protein>
<sequence length="182" mass="20202">MQTDYAELVRRTIRSVPDWPTPGVTFRDITPVLQDPRTFRVLIDLFVYRYMRQRLDLVAGVDARGFIVGAVLAHELNLGFVPVRKKSKLPYRTVAEEYSLEYGNAAVEMHTDSVRTGQRVLLVDDLIDTGGTMLAAIKLLQRLGANVVEAAAIIDLPYLGGSAQITATGTPLYTVCQYQEGD</sequence>
<comment type="function">
    <text evidence="1">Catalyzes a salvage reaction resulting in the formation of AMP, that is energically less costly than de novo synthesis.</text>
</comment>
<comment type="catalytic activity">
    <reaction evidence="1">
        <text>AMP + diphosphate = 5-phospho-alpha-D-ribose 1-diphosphate + adenine</text>
        <dbReference type="Rhea" id="RHEA:16609"/>
        <dbReference type="ChEBI" id="CHEBI:16708"/>
        <dbReference type="ChEBI" id="CHEBI:33019"/>
        <dbReference type="ChEBI" id="CHEBI:58017"/>
        <dbReference type="ChEBI" id="CHEBI:456215"/>
        <dbReference type="EC" id="2.4.2.7"/>
    </reaction>
</comment>
<comment type="pathway">
    <text evidence="1">Purine metabolism; AMP biosynthesis via salvage pathway; AMP from adenine: step 1/1.</text>
</comment>
<comment type="subunit">
    <text evidence="1">Homodimer.</text>
</comment>
<comment type="subcellular location">
    <subcellularLocation>
        <location evidence="1">Cytoplasm</location>
    </subcellularLocation>
</comment>
<comment type="similarity">
    <text evidence="1">Belongs to the purine/pyrimidine phosphoribosyltransferase family.</text>
</comment>
<reference key="1">
    <citation type="journal article" date="2003" name="Nat. Genet.">
        <title>Comparative analysis of the genome sequences of Bordetella pertussis, Bordetella parapertussis and Bordetella bronchiseptica.</title>
        <authorList>
            <person name="Parkhill J."/>
            <person name="Sebaihia M."/>
            <person name="Preston A."/>
            <person name="Murphy L.D."/>
            <person name="Thomson N.R."/>
            <person name="Harris D.E."/>
            <person name="Holden M.T.G."/>
            <person name="Churcher C.M."/>
            <person name="Bentley S.D."/>
            <person name="Mungall K.L."/>
            <person name="Cerdeno-Tarraga A.-M."/>
            <person name="Temple L."/>
            <person name="James K.D."/>
            <person name="Harris B."/>
            <person name="Quail M.A."/>
            <person name="Achtman M."/>
            <person name="Atkin R."/>
            <person name="Baker S."/>
            <person name="Basham D."/>
            <person name="Bason N."/>
            <person name="Cherevach I."/>
            <person name="Chillingworth T."/>
            <person name="Collins M."/>
            <person name="Cronin A."/>
            <person name="Davis P."/>
            <person name="Doggett J."/>
            <person name="Feltwell T."/>
            <person name="Goble A."/>
            <person name="Hamlin N."/>
            <person name="Hauser H."/>
            <person name="Holroyd S."/>
            <person name="Jagels K."/>
            <person name="Leather S."/>
            <person name="Moule S."/>
            <person name="Norberczak H."/>
            <person name="O'Neil S."/>
            <person name="Ormond D."/>
            <person name="Price C."/>
            <person name="Rabbinowitsch E."/>
            <person name="Rutter S."/>
            <person name="Sanders M."/>
            <person name="Saunders D."/>
            <person name="Seeger K."/>
            <person name="Sharp S."/>
            <person name="Simmonds M."/>
            <person name="Skelton J."/>
            <person name="Squares R."/>
            <person name="Squares S."/>
            <person name="Stevens K."/>
            <person name="Unwin L."/>
            <person name="Whitehead S."/>
            <person name="Barrell B.G."/>
            <person name="Maskell D.J."/>
        </authorList>
    </citation>
    <scope>NUCLEOTIDE SEQUENCE [LARGE SCALE GENOMIC DNA]</scope>
    <source>
        <strain>Tohama I / ATCC BAA-589 / NCTC 13251</strain>
    </source>
</reference>
<keyword id="KW-0963">Cytoplasm</keyword>
<keyword id="KW-0328">Glycosyltransferase</keyword>
<keyword id="KW-0660">Purine salvage</keyword>
<keyword id="KW-1185">Reference proteome</keyword>
<keyword id="KW-0808">Transferase</keyword>